<evidence type="ECO:0000255" key="1">
    <source>
        <dbReference type="HAMAP-Rule" id="MF_00244"/>
    </source>
</evidence>
<evidence type="ECO:0000305" key="2"/>
<feature type="chain" id="PRO_0000336712" description="Probable nicotinate-nucleotide adenylyltransferase">
    <location>
        <begin position="1"/>
        <end position="204"/>
    </location>
</feature>
<gene>
    <name evidence="1" type="primary">nadD</name>
    <name type="ordered locus">Mjls_3535</name>
</gene>
<proteinExistence type="inferred from homology"/>
<accession>A3Q2D5</accession>
<comment type="function">
    <text evidence="1">Catalyzes the reversible adenylation of nicotinate mononucleotide (NaMN) to nicotinic acid adenine dinucleotide (NaAD).</text>
</comment>
<comment type="catalytic activity">
    <reaction evidence="1">
        <text>nicotinate beta-D-ribonucleotide + ATP + H(+) = deamido-NAD(+) + diphosphate</text>
        <dbReference type="Rhea" id="RHEA:22860"/>
        <dbReference type="ChEBI" id="CHEBI:15378"/>
        <dbReference type="ChEBI" id="CHEBI:30616"/>
        <dbReference type="ChEBI" id="CHEBI:33019"/>
        <dbReference type="ChEBI" id="CHEBI:57502"/>
        <dbReference type="ChEBI" id="CHEBI:58437"/>
        <dbReference type="EC" id="2.7.7.18"/>
    </reaction>
</comment>
<comment type="pathway">
    <text evidence="1">Cofactor biosynthesis; NAD(+) biosynthesis; deamido-NAD(+) from nicotinate D-ribonucleotide: step 1/1.</text>
</comment>
<comment type="similarity">
    <text evidence="1">Belongs to the NadD family.</text>
</comment>
<comment type="sequence caution" evidence="2">
    <conflict type="erroneous initiation">
        <sequence resource="EMBL-CDS" id="ABN99312"/>
    </conflict>
</comment>
<reference key="1">
    <citation type="submission" date="2007-02" db="EMBL/GenBank/DDBJ databases">
        <title>Complete sequence of Mycobacterium sp. JLS.</title>
        <authorList>
            <consortium name="US DOE Joint Genome Institute"/>
            <person name="Copeland A."/>
            <person name="Lucas S."/>
            <person name="Lapidus A."/>
            <person name="Barry K."/>
            <person name="Detter J.C."/>
            <person name="Glavina del Rio T."/>
            <person name="Hammon N."/>
            <person name="Israni S."/>
            <person name="Dalin E."/>
            <person name="Tice H."/>
            <person name="Pitluck S."/>
            <person name="Chain P."/>
            <person name="Malfatti S."/>
            <person name="Shin M."/>
            <person name="Vergez L."/>
            <person name="Schmutz J."/>
            <person name="Larimer F."/>
            <person name="Land M."/>
            <person name="Hauser L."/>
            <person name="Kyrpides N."/>
            <person name="Mikhailova N."/>
            <person name="Miller C.D."/>
            <person name="Anderson A.J."/>
            <person name="Sims R.C."/>
            <person name="Richardson P."/>
        </authorList>
    </citation>
    <scope>NUCLEOTIDE SEQUENCE [LARGE SCALE GENOMIC DNA]</scope>
    <source>
        <strain>JLS</strain>
    </source>
</reference>
<protein>
    <recommendedName>
        <fullName evidence="1">Probable nicotinate-nucleotide adenylyltransferase</fullName>
        <ecNumber evidence="1">2.7.7.18</ecNumber>
    </recommendedName>
    <alternativeName>
        <fullName evidence="1">Deamido-NAD(+) diphosphorylase</fullName>
    </alternativeName>
    <alternativeName>
        <fullName evidence="1">Deamido-NAD(+) pyrophosphorylase</fullName>
    </alternativeName>
    <alternativeName>
        <fullName evidence="1">Nicotinate mononucleotide adenylyltransferase</fullName>
        <shortName evidence="1">NaMN adenylyltransferase</shortName>
    </alternativeName>
</protein>
<sequence>MGGTFDPIHHGHLVAASEVADLFDLDEVVFVPTGQPWQKHDRRVTAPEDRYLMTVIATASNPRFSVSRVDIDRGGPTYTKDTLRDLHELNPDADLYFITGADALGSILSWQNWEEMFSIARFVGVSRPGYELDGKHISAALRELPADALSLVEVPALAISSSDCRKRAVEARPIWYLVPDGVVQYVTKRRLYLPEPTPELRTPE</sequence>
<keyword id="KW-0067">ATP-binding</keyword>
<keyword id="KW-0520">NAD</keyword>
<keyword id="KW-0547">Nucleotide-binding</keyword>
<keyword id="KW-0548">Nucleotidyltransferase</keyword>
<keyword id="KW-0662">Pyridine nucleotide biosynthesis</keyword>
<keyword id="KW-0808">Transferase</keyword>
<organism>
    <name type="scientific">Mycobacterium sp. (strain JLS)</name>
    <dbReference type="NCBI Taxonomy" id="164757"/>
    <lineage>
        <taxon>Bacteria</taxon>
        <taxon>Bacillati</taxon>
        <taxon>Actinomycetota</taxon>
        <taxon>Actinomycetes</taxon>
        <taxon>Mycobacteriales</taxon>
        <taxon>Mycobacteriaceae</taxon>
        <taxon>Mycobacterium</taxon>
    </lineage>
</organism>
<dbReference type="EC" id="2.7.7.18" evidence="1"/>
<dbReference type="EMBL" id="CP000580">
    <property type="protein sequence ID" value="ABN99312.1"/>
    <property type="status" value="ALT_INIT"/>
    <property type="molecule type" value="Genomic_DNA"/>
</dbReference>
<dbReference type="SMR" id="A3Q2D5"/>
<dbReference type="KEGG" id="mjl:Mjls_3535"/>
<dbReference type="HOGENOM" id="CLU_069765_1_1_11"/>
<dbReference type="UniPathway" id="UPA00253">
    <property type="reaction ID" value="UER00332"/>
</dbReference>
<dbReference type="GO" id="GO:0005524">
    <property type="term" value="F:ATP binding"/>
    <property type="evidence" value="ECO:0007669"/>
    <property type="project" value="UniProtKB-KW"/>
</dbReference>
<dbReference type="GO" id="GO:0004515">
    <property type="term" value="F:nicotinate-nucleotide adenylyltransferase activity"/>
    <property type="evidence" value="ECO:0007669"/>
    <property type="project" value="UniProtKB-UniRule"/>
</dbReference>
<dbReference type="GO" id="GO:0009435">
    <property type="term" value="P:NAD biosynthetic process"/>
    <property type="evidence" value="ECO:0007669"/>
    <property type="project" value="UniProtKB-UniRule"/>
</dbReference>
<dbReference type="CDD" id="cd02165">
    <property type="entry name" value="NMNAT"/>
    <property type="match status" value="1"/>
</dbReference>
<dbReference type="FunFam" id="3.40.50.620:FF:000039">
    <property type="entry name" value="Probable nicotinate-nucleotide adenylyltransferase"/>
    <property type="match status" value="1"/>
</dbReference>
<dbReference type="Gene3D" id="3.40.50.620">
    <property type="entry name" value="HUPs"/>
    <property type="match status" value="1"/>
</dbReference>
<dbReference type="HAMAP" id="MF_00244">
    <property type="entry name" value="NaMN_adenylyltr"/>
    <property type="match status" value="1"/>
</dbReference>
<dbReference type="InterPro" id="IPR004821">
    <property type="entry name" value="Cyt_trans-like"/>
</dbReference>
<dbReference type="InterPro" id="IPR005248">
    <property type="entry name" value="NadD/NMNAT"/>
</dbReference>
<dbReference type="InterPro" id="IPR014729">
    <property type="entry name" value="Rossmann-like_a/b/a_fold"/>
</dbReference>
<dbReference type="NCBIfam" id="TIGR00125">
    <property type="entry name" value="cyt_tran_rel"/>
    <property type="match status" value="1"/>
</dbReference>
<dbReference type="NCBIfam" id="TIGR00482">
    <property type="entry name" value="nicotinate (nicotinamide) nucleotide adenylyltransferase"/>
    <property type="match status" value="1"/>
</dbReference>
<dbReference type="NCBIfam" id="NF000840">
    <property type="entry name" value="PRK00071.1-3"/>
    <property type="match status" value="1"/>
</dbReference>
<dbReference type="PANTHER" id="PTHR39321">
    <property type="entry name" value="NICOTINATE-NUCLEOTIDE ADENYLYLTRANSFERASE-RELATED"/>
    <property type="match status" value="1"/>
</dbReference>
<dbReference type="PANTHER" id="PTHR39321:SF3">
    <property type="entry name" value="PHOSPHOPANTETHEINE ADENYLYLTRANSFERASE"/>
    <property type="match status" value="1"/>
</dbReference>
<dbReference type="Pfam" id="PF01467">
    <property type="entry name" value="CTP_transf_like"/>
    <property type="match status" value="1"/>
</dbReference>
<dbReference type="SUPFAM" id="SSF52374">
    <property type="entry name" value="Nucleotidylyl transferase"/>
    <property type="match status" value="1"/>
</dbReference>
<name>NADD_MYCSJ</name>